<reference key="1">
    <citation type="journal article" date="1998" name="Electrophoresis">
        <title>Two-dimensional gel electrophoresis separation and N-terminal sequence analysis of proteins from Clostridium pasteurianum W5.</title>
        <authorList>
            <person name="Flengsrud R."/>
            <person name="Skjeldal L."/>
        </authorList>
    </citation>
    <scope>PROTEIN SEQUENCE</scope>
    <source>
        <strain>ATCC 6013 / DSM 525 / NCIB 9486 / VKM B-1774 / W5</strain>
    </source>
</reference>
<keyword id="KW-0903">Direct protein sequencing</keyword>
<name>UN37_CLOPA</name>
<comment type="miscellaneous">
    <text>On the 2D-gel the determined pI of this unknown protein is: 5.8, its MW is: 44.7 kDa.</text>
</comment>
<organism>
    <name type="scientific">Clostridium pasteurianum</name>
    <dbReference type="NCBI Taxonomy" id="1501"/>
    <lineage>
        <taxon>Bacteria</taxon>
        <taxon>Bacillati</taxon>
        <taxon>Bacillota</taxon>
        <taxon>Clostridia</taxon>
        <taxon>Eubacteriales</taxon>
        <taxon>Clostridiaceae</taxon>
        <taxon>Clostridium</taxon>
    </lineage>
</organism>
<proteinExistence type="evidence at protein level"/>
<sequence length="14" mass="1580">MYNNXTIEDQGVKG</sequence>
<accession>P81358</accession>
<feature type="chain" id="PRO_0000055543" description="Unknown protein CP 37 from 2D-PAGE">
    <location>
        <begin position="1"/>
        <end position="14" status="greater than"/>
    </location>
</feature>
<feature type="non-terminal residue">
    <location>
        <position position="14"/>
    </location>
</feature>
<protein>
    <recommendedName>
        <fullName>Unknown protein CP 37 from 2D-PAGE</fullName>
    </recommendedName>
</protein>